<evidence type="ECO:0000255" key="1">
    <source>
        <dbReference type="HAMAP-Rule" id="MF_00022"/>
    </source>
</evidence>
<protein>
    <recommendedName>
        <fullName evidence="1">Glutamate--tRNA ligase 1</fullName>
        <ecNumber evidence="1">6.1.1.17</ecNumber>
    </recommendedName>
    <alternativeName>
        <fullName evidence="1">Glutamyl-tRNA synthetase 1</fullName>
        <shortName evidence="1">GluRS 1</shortName>
    </alternativeName>
</protein>
<reference key="1">
    <citation type="journal article" date="2003" name="Proc. Natl. Acad. Sci. U.S.A.">
        <title>The complete genome sequence of the carcinogenic bacterium Helicobacter hepaticus.</title>
        <authorList>
            <person name="Suerbaum S."/>
            <person name="Josenhans C."/>
            <person name="Sterzenbach T."/>
            <person name="Drescher B."/>
            <person name="Brandt P."/>
            <person name="Bell M."/>
            <person name="Droege M."/>
            <person name="Fartmann B."/>
            <person name="Fischer H.-P."/>
            <person name="Ge Z."/>
            <person name="Hoerster A."/>
            <person name="Holland R."/>
            <person name="Klein K."/>
            <person name="Koenig J."/>
            <person name="Macko L."/>
            <person name="Mendz G.L."/>
            <person name="Nyakatura G."/>
            <person name="Schauer D.B."/>
            <person name="Shen Z."/>
            <person name="Weber J."/>
            <person name="Frosch M."/>
            <person name="Fox J.G."/>
        </authorList>
    </citation>
    <scope>NUCLEOTIDE SEQUENCE [LARGE SCALE GENOMIC DNA]</scope>
    <source>
        <strain>ATCC 51449 / 3B1</strain>
    </source>
</reference>
<sequence length="464" mass="52985">MDKIVTRFAPSPTGYLHIGGLRTALFNYLYARANGGKFLLRIEDTDLARNSMEATKAIIESFEWAGLDYDGEVVYQSQRFDLYKTYIQQLLESKKAYYCYMSKEELDALRKEQEKNKQTPRYDNRYRDFTGIPPQGIQPVVRIKAPLEGNIEFEDGIKGQISINAKEIDDFIIARSDGTPTYNFVVAVDDALMGITDVIRGDDHLSNTPKQIIIYNALGFALPRFFHVPMILNSQGKKLSKRDGAMGVMDYAKMGYLPEAILNFLVRLGWSYGDKEIFSLEEMLELFNPNELNSSPSAYNEDKLLWLNQHYIKYMDNTLLEQLLGHFGVTKLSESKREILYPALKDRSNTLVSFAQGFNEVMNAPCSYDEKMRIKLDANATQWLNELCKNLNMASWEDNPNIIESYLHQFALEHQIKIGKLMPTLRCALLGKSGGIGVCEALAVLGIEESMRRIYTFIGYQNNI</sequence>
<proteinExistence type="inferred from homology"/>
<gene>
    <name evidence="1" type="primary">gltX1</name>
    <name type="ordered locus">HH_0926</name>
</gene>
<name>SYE1_HELHP</name>
<comment type="function">
    <text evidence="1">Catalyzes the attachment of glutamate to tRNA(Glu) in a two-step reaction: glutamate is first activated by ATP to form Glu-AMP and then transferred to the acceptor end of tRNA(Glu).</text>
</comment>
<comment type="catalytic activity">
    <reaction evidence="1">
        <text>tRNA(Glu) + L-glutamate + ATP = L-glutamyl-tRNA(Glu) + AMP + diphosphate</text>
        <dbReference type="Rhea" id="RHEA:23540"/>
        <dbReference type="Rhea" id="RHEA-COMP:9663"/>
        <dbReference type="Rhea" id="RHEA-COMP:9680"/>
        <dbReference type="ChEBI" id="CHEBI:29985"/>
        <dbReference type="ChEBI" id="CHEBI:30616"/>
        <dbReference type="ChEBI" id="CHEBI:33019"/>
        <dbReference type="ChEBI" id="CHEBI:78442"/>
        <dbReference type="ChEBI" id="CHEBI:78520"/>
        <dbReference type="ChEBI" id="CHEBI:456215"/>
        <dbReference type="EC" id="6.1.1.17"/>
    </reaction>
</comment>
<comment type="subunit">
    <text evidence="1">Monomer.</text>
</comment>
<comment type="subcellular location">
    <subcellularLocation>
        <location evidence="1">Cytoplasm</location>
    </subcellularLocation>
</comment>
<comment type="similarity">
    <text evidence="1">Belongs to the class-I aminoacyl-tRNA synthetase family. Glutamate--tRNA ligase type 1 subfamily.</text>
</comment>
<dbReference type="EC" id="6.1.1.17" evidence="1"/>
<dbReference type="EMBL" id="AE017125">
    <property type="protein sequence ID" value="AAP77523.1"/>
    <property type="molecule type" value="Genomic_DNA"/>
</dbReference>
<dbReference type="RefSeq" id="WP_011115766.1">
    <property type="nucleotide sequence ID" value="NC_004917.1"/>
</dbReference>
<dbReference type="SMR" id="Q7VHN8"/>
<dbReference type="STRING" id="235279.HH_0926"/>
<dbReference type="KEGG" id="hhe:HH_0926"/>
<dbReference type="eggNOG" id="COG0008">
    <property type="taxonomic scope" value="Bacteria"/>
</dbReference>
<dbReference type="HOGENOM" id="CLU_015768_6_0_7"/>
<dbReference type="OrthoDB" id="9807503at2"/>
<dbReference type="Proteomes" id="UP000002495">
    <property type="component" value="Chromosome"/>
</dbReference>
<dbReference type="GO" id="GO:0005829">
    <property type="term" value="C:cytosol"/>
    <property type="evidence" value="ECO:0007669"/>
    <property type="project" value="TreeGrafter"/>
</dbReference>
<dbReference type="GO" id="GO:0005524">
    <property type="term" value="F:ATP binding"/>
    <property type="evidence" value="ECO:0007669"/>
    <property type="project" value="UniProtKB-UniRule"/>
</dbReference>
<dbReference type="GO" id="GO:0004818">
    <property type="term" value="F:glutamate-tRNA ligase activity"/>
    <property type="evidence" value="ECO:0007669"/>
    <property type="project" value="UniProtKB-UniRule"/>
</dbReference>
<dbReference type="GO" id="GO:0000049">
    <property type="term" value="F:tRNA binding"/>
    <property type="evidence" value="ECO:0007669"/>
    <property type="project" value="InterPro"/>
</dbReference>
<dbReference type="GO" id="GO:0008270">
    <property type="term" value="F:zinc ion binding"/>
    <property type="evidence" value="ECO:0007669"/>
    <property type="project" value="InterPro"/>
</dbReference>
<dbReference type="GO" id="GO:0006424">
    <property type="term" value="P:glutamyl-tRNA aminoacylation"/>
    <property type="evidence" value="ECO:0007669"/>
    <property type="project" value="UniProtKB-UniRule"/>
</dbReference>
<dbReference type="CDD" id="cd00808">
    <property type="entry name" value="GluRS_core"/>
    <property type="match status" value="1"/>
</dbReference>
<dbReference type="FunFam" id="3.40.50.620:FF:000007">
    <property type="entry name" value="Glutamate--tRNA ligase"/>
    <property type="match status" value="1"/>
</dbReference>
<dbReference type="Gene3D" id="1.10.10.350">
    <property type="match status" value="1"/>
</dbReference>
<dbReference type="Gene3D" id="3.40.50.620">
    <property type="entry name" value="HUPs"/>
    <property type="match status" value="1"/>
</dbReference>
<dbReference type="HAMAP" id="MF_00022">
    <property type="entry name" value="Glu_tRNA_synth_type1"/>
    <property type="match status" value="1"/>
</dbReference>
<dbReference type="InterPro" id="IPR045462">
    <property type="entry name" value="aa-tRNA-synth_I_cd-bd"/>
</dbReference>
<dbReference type="InterPro" id="IPR020751">
    <property type="entry name" value="aa-tRNA-synth_I_codon-bd_sub2"/>
</dbReference>
<dbReference type="InterPro" id="IPR001412">
    <property type="entry name" value="aa-tRNA-synth_I_CS"/>
</dbReference>
<dbReference type="InterPro" id="IPR008925">
    <property type="entry name" value="aa_tRNA-synth_I_cd-bd_sf"/>
</dbReference>
<dbReference type="InterPro" id="IPR004527">
    <property type="entry name" value="Glu-tRNA-ligase_bac/mito"/>
</dbReference>
<dbReference type="InterPro" id="IPR000924">
    <property type="entry name" value="Glu/Gln-tRNA-synth"/>
</dbReference>
<dbReference type="InterPro" id="IPR020058">
    <property type="entry name" value="Glu/Gln-tRNA-synth_Ib_cat-dom"/>
</dbReference>
<dbReference type="InterPro" id="IPR049940">
    <property type="entry name" value="GluQ/Sye"/>
</dbReference>
<dbReference type="InterPro" id="IPR033910">
    <property type="entry name" value="GluRS_core"/>
</dbReference>
<dbReference type="InterPro" id="IPR014729">
    <property type="entry name" value="Rossmann-like_a/b/a_fold"/>
</dbReference>
<dbReference type="NCBIfam" id="TIGR00464">
    <property type="entry name" value="gltX_bact"/>
    <property type="match status" value="1"/>
</dbReference>
<dbReference type="PANTHER" id="PTHR43311">
    <property type="entry name" value="GLUTAMATE--TRNA LIGASE"/>
    <property type="match status" value="1"/>
</dbReference>
<dbReference type="PANTHER" id="PTHR43311:SF2">
    <property type="entry name" value="GLUTAMATE--TRNA LIGASE, MITOCHONDRIAL-RELATED"/>
    <property type="match status" value="1"/>
</dbReference>
<dbReference type="Pfam" id="PF19269">
    <property type="entry name" value="Anticodon_2"/>
    <property type="match status" value="1"/>
</dbReference>
<dbReference type="Pfam" id="PF00749">
    <property type="entry name" value="tRNA-synt_1c"/>
    <property type="match status" value="1"/>
</dbReference>
<dbReference type="PRINTS" id="PR00987">
    <property type="entry name" value="TRNASYNTHGLU"/>
</dbReference>
<dbReference type="SUPFAM" id="SSF48163">
    <property type="entry name" value="An anticodon-binding domain of class I aminoacyl-tRNA synthetases"/>
    <property type="match status" value="1"/>
</dbReference>
<dbReference type="SUPFAM" id="SSF52374">
    <property type="entry name" value="Nucleotidylyl transferase"/>
    <property type="match status" value="1"/>
</dbReference>
<dbReference type="PROSITE" id="PS00178">
    <property type="entry name" value="AA_TRNA_LIGASE_I"/>
    <property type="match status" value="1"/>
</dbReference>
<feature type="chain" id="PRO_0000119574" description="Glutamate--tRNA ligase 1">
    <location>
        <begin position="1"/>
        <end position="464"/>
    </location>
</feature>
<feature type="short sequence motif" description="'HIGH' region" evidence="1">
    <location>
        <begin position="10"/>
        <end position="20"/>
    </location>
</feature>
<feature type="short sequence motif" description="'KMSKS' region" evidence="1">
    <location>
        <begin position="238"/>
        <end position="242"/>
    </location>
</feature>
<feature type="binding site" evidence="1">
    <location>
        <position position="241"/>
    </location>
    <ligand>
        <name>ATP</name>
        <dbReference type="ChEBI" id="CHEBI:30616"/>
    </ligand>
</feature>
<accession>Q7VHN8</accession>
<keyword id="KW-0030">Aminoacyl-tRNA synthetase</keyword>
<keyword id="KW-0067">ATP-binding</keyword>
<keyword id="KW-0963">Cytoplasm</keyword>
<keyword id="KW-0436">Ligase</keyword>
<keyword id="KW-0547">Nucleotide-binding</keyword>
<keyword id="KW-0648">Protein biosynthesis</keyword>
<keyword id="KW-1185">Reference proteome</keyword>
<organism>
    <name type="scientific">Helicobacter hepaticus (strain ATCC 51449 / 3B1)</name>
    <dbReference type="NCBI Taxonomy" id="235279"/>
    <lineage>
        <taxon>Bacteria</taxon>
        <taxon>Pseudomonadati</taxon>
        <taxon>Campylobacterota</taxon>
        <taxon>Epsilonproteobacteria</taxon>
        <taxon>Campylobacterales</taxon>
        <taxon>Helicobacteraceae</taxon>
        <taxon>Helicobacter</taxon>
    </lineage>
</organism>